<accession>B8J0C2</accession>
<gene>
    <name evidence="1" type="primary">fhs</name>
    <name type="ordered locus">Ddes_1296</name>
</gene>
<organism>
    <name type="scientific">Desulfovibrio desulfuricans (strain ATCC 27774 / DSM 6949 / MB)</name>
    <dbReference type="NCBI Taxonomy" id="525146"/>
    <lineage>
        <taxon>Bacteria</taxon>
        <taxon>Pseudomonadati</taxon>
        <taxon>Thermodesulfobacteriota</taxon>
        <taxon>Desulfovibrionia</taxon>
        <taxon>Desulfovibrionales</taxon>
        <taxon>Desulfovibrionaceae</taxon>
        <taxon>Desulfovibrio</taxon>
    </lineage>
</organism>
<protein>
    <recommendedName>
        <fullName evidence="1">Formate--tetrahydrofolate ligase</fullName>
        <ecNumber evidence="1">6.3.4.3</ecNumber>
    </recommendedName>
    <alternativeName>
        <fullName evidence="1">Formyltetrahydrofolate synthetase</fullName>
        <shortName evidence="1">FHS</shortName>
        <shortName evidence="1">FTHFS</shortName>
    </alternativeName>
</protein>
<comment type="catalytic activity">
    <reaction evidence="1">
        <text>(6S)-5,6,7,8-tetrahydrofolate + formate + ATP = (6R)-10-formyltetrahydrofolate + ADP + phosphate</text>
        <dbReference type="Rhea" id="RHEA:20221"/>
        <dbReference type="ChEBI" id="CHEBI:15740"/>
        <dbReference type="ChEBI" id="CHEBI:30616"/>
        <dbReference type="ChEBI" id="CHEBI:43474"/>
        <dbReference type="ChEBI" id="CHEBI:57453"/>
        <dbReference type="ChEBI" id="CHEBI:195366"/>
        <dbReference type="ChEBI" id="CHEBI:456216"/>
        <dbReference type="EC" id="6.3.4.3"/>
    </reaction>
</comment>
<comment type="pathway">
    <text evidence="1">One-carbon metabolism; tetrahydrofolate interconversion.</text>
</comment>
<comment type="similarity">
    <text evidence="1">Belongs to the formate--tetrahydrofolate ligase family.</text>
</comment>
<dbReference type="EC" id="6.3.4.3" evidence="1"/>
<dbReference type="EMBL" id="CP001358">
    <property type="protein sequence ID" value="ACL49199.1"/>
    <property type="molecule type" value="Genomic_DNA"/>
</dbReference>
<dbReference type="SMR" id="B8J0C2"/>
<dbReference type="STRING" id="525146.Ddes_1296"/>
<dbReference type="KEGG" id="dds:Ddes_1296"/>
<dbReference type="eggNOG" id="COG2759">
    <property type="taxonomic scope" value="Bacteria"/>
</dbReference>
<dbReference type="HOGENOM" id="CLU_003601_3_3_7"/>
<dbReference type="UniPathway" id="UPA00193"/>
<dbReference type="GO" id="GO:0005524">
    <property type="term" value="F:ATP binding"/>
    <property type="evidence" value="ECO:0007669"/>
    <property type="project" value="UniProtKB-UniRule"/>
</dbReference>
<dbReference type="GO" id="GO:0004329">
    <property type="term" value="F:formate-tetrahydrofolate ligase activity"/>
    <property type="evidence" value="ECO:0007669"/>
    <property type="project" value="UniProtKB-UniRule"/>
</dbReference>
<dbReference type="GO" id="GO:0035999">
    <property type="term" value="P:tetrahydrofolate interconversion"/>
    <property type="evidence" value="ECO:0007669"/>
    <property type="project" value="UniProtKB-UniRule"/>
</dbReference>
<dbReference type="CDD" id="cd00477">
    <property type="entry name" value="FTHFS"/>
    <property type="match status" value="1"/>
</dbReference>
<dbReference type="Gene3D" id="3.30.1510.10">
    <property type="entry name" value="Domain 2, N(10)-formyltetrahydrofolate synthetase"/>
    <property type="match status" value="1"/>
</dbReference>
<dbReference type="Gene3D" id="3.10.410.10">
    <property type="entry name" value="Formyltetrahydrofolate synthetase, domain 3"/>
    <property type="match status" value="1"/>
</dbReference>
<dbReference type="Gene3D" id="3.40.50.300">
    <property type="entry name" value="P-loop containing nucleotide triphosphate hydrolases"/>
    <property type="match status" value="1"/>
</dbReference>
<dbReference type="HAMAP" id="MF_01543">
    <property type="entry name" value="FTHFS"/>
    <property type="match status" value="1"/>
</dbReference>
<dbReference type="InterPro" id="IPR000559">
    <property type="entry name" value="Formate_THF_ligase"/>
</dbReference>
<dbReference type="InterPro" id="IPR020628">
    <property type="entry name" value="Formate_THF_ligase_CS"/>
</dbReference>
<dbReference type="InterPro" id="IPR027417">
    <property type="entry name" value="P-loop_NTPase"/>
</dbReference>
<dbReference type="NCBIfam" id="NF010032">
    <property type="entry name" value="PRK13507.1"/>
    <property type="match status" value="1"/>
</dbReference>
<dbReference type="Pfam" id="PF01268">
    <property type="entry name" value="FTHFS"/>
    <property type="match status" value="1"/>
</dbReference>
<dbReference type="SUPFAM" id="SSF52540">
    <property type="entry name" value="P-loop containing nucleoside triphosphate hydrolases"/>
    <property type="match status" value="1"/>
</dbReference>
<dbReference type="PROSITE" id="PS00721">
    <property type="entry name" value="FTHFS_1"/>
    <property type="match status" value="1"/>
</dbReference>
<dbReference type="PROSITE" id="PS00722">
    <property type="entry name" value="FTHFS_2"/>
    <property type="match status" value="1"/>
</dbReference>
<keyword id="KW-0067">ATP-binding</keyword>
<keyword id="KW-0436">Ligase</keyword>
<keyword id="KW-0547">Nucleotide-binding</keyword>
<keyword id="KW-0554">One-carbon metabolism</keyword>
<proteinExistence type="inferred from homology"/>
<reference key="1">
    <citation type="submission" date="2009-01" db="EMBL/GenBank/DDBJ databases">
        <title>Complete sequence of Desulfovibrio desulfuricans subsp. desulfuricans str. ATCC 27774.</title>
        <authorList>
            <consortium name="US DOE Joint Genome Institute"/>
            <person name="Lucas S."/>
            <person name="Copeland A."/>
            <person name="Lapidus A."/>
            <person name="Glavina del Rio T."/>
            <person name="Tice H."/>
            <person name="Bruce D."/>
            <person name="Goodwin L."/>
            <person name="Pitluck S."/>
            <person name="Sims D."/>
            <person name="Lu M."/>
            <person name="Kiss H."/>
            <person name="Meineke L."/>
            <person name="Brettin T."/>
            <person name="Detter J.C."/>
            <person name="Han C."/>
            <person name="Larimer F."/>
            <person name="Land M."/>
            <person name="Hauser L."/>
            <person name="Kyrpides N."/>
            <person name="Ovchinnikova G."/>
            <person name="Hazen T.C."/>
        </authorList>
    </citation>
    <scope>NUCLEOTIDE SEQUENCE [LARGE SCALE GENOMIC DNA]</scope>
    <source>
        <strain>ATCC 27774 / DSM 6949 / MB</strain>
    </source>
</reference>
<feature type="chain" id="PRO_1000185254" description="Formate--tetrahydrofolate ligase">
    <location>
        <begin position="1"/>
        <end position="591"/>
    </location>
</feature>
<feature type="binding site" evidence="1">
    <location>
        <begin position="74"/>
        <end position="81"/>
    </location>
    <ligand>
        <name>ATP</name>
        <dbReference type="ChEBI" id="CHEBI:30616"/>
    </ligand>
</feature>
<evidence type="ECO:0000255" key="1">
    <source>
        <dbReference type="HAMAP-Rule" id="MF_01543"/>
    </source>
</evidence>
<sequence length="591" mass="63964">MTLDPTKHPDWKIALDAESRMKTVETLAAELGLEKAELLPYGHYMGKVEQQAVMQRLKDRPNGKYIDVTAITPTPLGEGKSTTTIGLVQGLARRGRRSSAAIRQPSGGPTMGMKGSAAGGGLSQCIPLTPYSLNFTGDLHAVGAAHNLGMTALTSRMQHERNYDDATLEKLSGMARLNIDPTRINTGWVMDFCVQALRNIIIGIEGDGRRNDGFMMRSHFDITVASEVMCILSIARDLRDLRERMGRMVLAHDRNGKPVTTSDLGVAGAMTAWLVEAAKPNLIQTIEGQPVFVHTGPFANIALGQSSVIADRVALKLSDYHVTESGFAAEMGYEKFWNLKCHYSGLVPDAAVVVATVRALKNHGGAPQPKPGQALPEPYTREDVGLVEAGCANLLHHLGIVRRSGVPAVVCINKFHTDTKAEVDAIRRICEQAGARVALSEHWEKGGEGALELADAVTDACNEKNEFRPLYNWNSPLTERITTIAQEVYGADGVEFEPLAAQRLKDLQERPDADELGVCMVKTQYSLSDKPALKGVPKGWRLHVRDVLFFGGAGLVAPVSGDISLMPGTGSKPAFRNIDVDVETGKVTGLF</sequence>
<name>FTHS_DESDA</name>